<feature type="chain" id="PRO_1000008232" description="Translation initiation factor IF-2">
    <location>
        <begin position="1"/>
        <end position="646"/>
    </location>
</feature>
<feature type="domain" description="tr-type G">
    <location>
        <begin position="146"/>
        <end position="315"/>
    </location>
</feature>
<feature type="region of interest" description="G1" evidence="1">
    <location>
        <begin position="155"/>
        <end position="162"/>
    </location>
</feature>
<feature type="region of interest" description="G2" evidence="1">
    <location>
        <begin position="180"/>
        <end position="184"/>
    </location>
</feature>
<feature type="region of interest" description="G3" evidence="1">
    <location>
        <begin position="201"/>
        <end position="204"/>
    </location>
</feature>
<feature type="region of interest" description="G4" evidence="1">
    <location>
        <begin position="255"/>
        <end position="258"/>
    </location>
</feature>
<feature type="region of interest" description="G5" evidence="1">
    <location>
        <begin position="291"/>
        <end position="293"/>
    </location>
</feature>
<feature type="binding site" evidence="2">
    <location>
        <begin position="155"/>
        <end position="162"/>
    </location>
    <ligand>
        <name>GTP</name>
        <dbReference type="ChEBI" id="CHEBI:37565"/>
    </ligand>
</feature>
<feature type="binding site" evidence="2">
    <location>
        <begin position="201"/>
        <end position="205"/>
    </location>
    <ligand>
        <name>GTP</name>
        <dbReference type="ChEBI" id="CHEBI:37565"/>
    </ligand>
</feature>
<feature type="binding site" evidence="2">
    <location>
        <begin position="255"/>
        <end position="258"/>
    </location>
    <ligand>
        <name>GTP</name>
        <dbReference type="ChEBI" id="CHEBI:37565"/>
    </ligand>
</feature>
<protein>
    <recommendedName>
        <fullName evidence="2">Translation initiation factor IF-2</fullName>
    </recommendedName>
</protein>
<gene>
    <name evidence="2" type="primary">infB</name>
    <name type="ordered locus">CD630_13090</name>
</gene>
<name>IF2_CLOD6</name>
<reference key="1">
    <citation type="journal article" date="2006" name="Nat. Genet.">
        <title>The multidrug-resistant human pathogen Clostridium difficile has a highly mobile, mosaic genome.</title>
        <authorList>
            <person name="Sebaihia M."/>
            <person name="Wren B.W."/>
            <person name="Mullany P."/>
            <person name="Fairweather N.F."/>
            <person name="Minton N."/>
            <person name="Stabler R."/>
            <person name="Thomson N.R."/>
            <person name="Roberts A.P."/>
            <person name="Cerdeno-Tarraga A.M."/>
            <person name="Wang H."/>
            <person name="Holden M.T.G."/>
            <person name="Wright A."/>
            <person name="Churcher C."/>
            <person name="Quail M.A."/>
            <person name="Baker S."/>
            <person name="Bason N."/>
            <person name="Brooks K."/>
            <person name="Chillingworth T."/>
            <person name="Cronin A."/>
            <person name="Davis P."/>
            <person name="Dowd L."/>
            <person name="Fraser A."/>
            <person name="Feltwell T."/>
            <person name="Hance Z."/>
            <person name="Holroyd S."/>
            <person name="Jagels K."/>
            <person name="Moule S."/>
            <person name="Mungall K."/>
            <person name="Price C."/>
            <person name="Rabbinowitsch E."/>
            <person name="Sharp S."/>
            <person name="Simmonds M."/>
            <person name="Stevens K."/>
            <person name="Unwin L."/>
            <person name="Whithead S."/>
            <person name="Dupuy B."/>
            <person name="Dougan G."/>
            <person name="Barrell B."/>
            <person name="Parkhill J."/>
        </authorList>
    </citation>
    <scope>NUCLEOTIDE SEQUENCE [LARGE SCALE GENOMIC DNA]</scope>
    <source>
        <strain>630</strain>
    </source>
</reference>
<keyword id="KW-0963">Cytoplasm</keyword>
<keyword id="KW-0342">GTP-binding</keyword>
<keyword id="KW-0396">Initiation factor</keyword>
<keyword id="KW-0547">Nucleotide-binding</keyword>
<keyword id="KW-0648">Protein biosynthesis</keyword>
<keyword id="KW-1185">Reference proteome</keyword>
<accession>Q18BH4</accession>
<proteinExistence type="inferred from homology"/>
<evidence type="ECO:0000250" key="1"/>
<evidence type="ECO:0000255" key="2">
    <source>
        <dbReference type="HAMAP-Rule" id="MF_00100"/>
    </source>
</evidence>
<organism>
    <name type="scientific">Clostridioides difficile (strain 630)</name>
    <name type="common">Peptoclostridium difficile</name>
    <dbReference type="NCBI Taxonomy" id="272563"/>
    <lineage>
        <taxon>Bacteria</taxon>
        <taxon>Bacillati</taxon>
        <taxon>Bacillota</taxon>
        <taxon>Clostridia</taxon>
        <taxon>Peptostreptococcales</taxon>
        <taxon>Peptostreptococcaceae</taxon>
        <taxon>Clostridioides</taxon>
    </lineage>
</organism>
<comment type="function">
    <text evidence="2">One of the essential components for the initiation of protein synthesis. Protects formylmethionyl-tRNA from spontaneous hydrolysis and promotes its binding to the 30S ribosomal subunits. Also involved in the hydrolysis of GTP during the formation of the 70S ribosomal complex.</text>
</comment>
<comment type="subcellular location">
    <subcellularLocation>
        <location evidence="2">Cytoplasm</location>
    </subcellularLocation>
</comment>
<comment type="similarity">
    <text evidence="2">Belongs to the TRAFAC class translation factor GTPase superfamily. Classic translation factor GTPase family. IF-2 subfamily.</text>
</comment>
<dbReference type="EMBL" id="AM180355">
    <property type="protein sequence ID" value="CAJ68167.1"/>
    <property type="molecule type" value="Genomic_DNA"/>
</dbReference>
<dbReference type="RefSeq" id="WP_003438306.1">
    <property type="nucleotide sequence ID" value="NZ_JAUPES010000027.1"/>
</dbReference>
<dbReference type="RefSeq" id="YP_001087805.1">
    <property type="nucleotide sequence ID" value="NC_009089.1"/>
</dbReference>
<dbReference type="SMR" id="Q18BH4"/>
<dbReference type="STRING" id="272563.CD630_13090"/>
<dbReference type="EnsemblBacteria" id="CAJ68167">
    <property type="protein sequence ID" value="CAJ68167"/>
    <property type="gene ID" value="CD630_13090"/>
</dbReference>
<dbReference type="GeneID" id="66353712"/>
<dbReference type="KEGG" id="cdf:CD630_13090"/>
<dbReference type="KEGG" id="pdc:CDIF630_01465"/>
<dbReference type="PATRIC" id="fig|272563.120.peg.1369"/>
<dbReference type="eggNOG" id="COG0532">
    <property type="taxonomic scope" value="Bacteria"/>
</dbReference>
<dbReference type="OrthoDB" id="9811804at2"/>
<dbReference type="PhylomeDB" id="Q18BH4"/>
<dbReference type="BioCyc" id="PDIF272563:G12WB-1445-MONOMER"/>
<dbReference type="Proteomes" id="UP000001978">
    <property type="component" value="Chromosome"/>
</dbReference>
<dbReference type="GO" id="GO:0005829">
    <property type="term" value="C:cytosol"/>
    <property type="evidence" value="ECO:0007669"/>
    <property type="project" value="TreeGrafter"/>
</dbReference>
<dbReference type="GO" id="GO:0005525">
    <property type="term" value="F:GTP binding"/>
    <property type="evidence" value="ECO:0007669"/>
    <property type="project" value="UniProtKB-KW"/>
</dbReference>
<dbReference type="GO" id="GO:0003924">
    <property type="term" value="F:GTPase activity"/>
    <property type="evidence" value="ECO:0007669"/>
    <property type="project" value="UniProtKB-UniRule"/>
</dbReference>
<dbReference type="GO" id="GO:0003743">
    <property type="term" value="F:translation initiation factor activity"/>
    <property type="evidence" value="ECO:0007669"/>
    <property type="project" value="UniProtKB-UniRule"/>
</dbReference>
<dbReference type="CDD" id="cd01887">
    <property type="entry name" value="IF2_eIF5B"/>
    <property type="match status" value="1"/>
</dbReference>
<dbReference type="CDD" id="cd03702">
    <property type="entry name" value="IF2_mtIF2_II"/>
    <property type="match status" value="1"/>
</dbReference>
<dbReference type="CDD" id="cd03692">
    <property type="entry name" value="mtIF2_IVc"/>
    <property type="match status" value="1"/>
</dbReference>
<dbReference type="FunFam" id="2.40.30.10:FF:000007">
    <property type="entry name" value="Translation initiation factor IF-2"/>
    <property type="match status" value="1"/>
</dbReference>
<dbReference type="FunFam" id="2.40.30.10:FF:000008">
    <property type="entry name" value="Translation initiation factor IF-2"/>
    <property type="match status" value="1"/>
</dbReference>
<dbReference type="FunFam" id="3.40.50.10050:FF:000001">
    <property type="entry name" value="Translation initiation factor IF-2"/>
    <property type="match status" value="1"/>
</dbReference>
<dbReference type="FunFam" id="3.40.50.300:FF:000019">
    <property type="entry name" value="Translation initiation factor IF-2"/>
    <property type="match status" value="1"/>
</dbReference>
<dbReference type="Gene3D" id="1.10.10.2480">
    <property type="match status" value="1"/>
</dbReference>
<dbReference type="Gene3D" id="3.40.50.300">
    <property type="entry name" value="P-loop containing nucleotide triphosphate hydrolases"/>
    <property type="match status" value="1"/>
</dbReference>
<dbReference type="Gene3D" id="2.40.30.10">
    <property type="entry name" value="Translation factors"/>
    <property type="match status" value="2"/>
</dbReference>
<dbReference type="Gene3D" id="3.40.50.10050">
    <property type="entry name" value="Translation initiation factor IF- 2, domain 3"/>
    <property type="match status" value="1"/>
</dbReference>
<dbReference type="HAMAP" id="MF_00100_B">
    <property type="entry name" value="IF_2_B"/>
    <property type="match status" value="1"/>
</dbReference>
<dbReference type="InterPro" id="IPR053905">
    <property type="entry name" value="EF-G-like_DII"/>
</dbReference>
<dbReference type="InterPro" id="IPR044145">
    <property type="entry name" value="IF2_II"/>
</dbReference>
<dbReference type="InterPro" id="IPR006847">
    <property type="entry name" value="IF2_N"/>
</dbReference>
<dbReference type="InterPro" id="IPR027417">
    <property type="entry name" value="P-loop_NTPase"/>
</dbReference>
<dbReference type="InterPro" id="IPR005225">
    <property type="entry name" value="Small_GTP-bd"/>
</dbReference>
<dbReference type="InterPro" id="IPR000795">
    <property type="entry name" value="T_Tr_GTP-bd_dom"/>
</dbReference>
<dbReference type="InterPro" id="IPR000178">
    <property type="entry name" value="TF_IF2_bacterial-like"/>
</dbReference>
<dbReference type="InterPro" id="IPR015760">
    <property type="entry name" value="TIF_IF2"/>
</dbReference>
<dbReference type="InterPro" id="IPR023115">
    <property type="entry name" value="TIF_IF2_dom3"/>
</dbReference>
<dbReference type="InterPro" id="IPR036925">
    <property type="entry name" value="TIF_IF2_dom3_sf"/>
</dbReference>
<dbReference type="InterPro" id="IPR009000">
    <property type="entry name" value="Transl_B-barrel_sf"/>
</dbReference>
<dbReference type="NCBIfam" id="TIGR00487">
    <property type="entry name" value="IF-2"/>
    <property type="match status" value="1"/>
</dbReference>
<dbReference type="NCBIfam" id="TIGR00231">
    <property type="entry name" value="small_GTP"/>
    <property type="match status" value="1"/>
</dbReference>
<dbReference type="PANTHER" id="PTHR43381:SF5">
    <property type="entry name" value="TR-TYPE G DOMAIN-CONTAINING PROTEIN"/>
    <property type="match status" value="1"/>
</dbReference>
<dbReference type="PANTHER" id="PTHR43381">
    <property type="entry name" value="TRANSLATION INITIATION FACTOR IF-2-RELATED"/>
    <property type="match status" value="1"/>
</dbReference>
<dbReference type="Pfam" id="PF22042">
    <property type="entry name" value="EF-G_D2"/>
    <property type="match status" value="1"/>
</dbReference>
<dbReference type="Pfam" id="PF00009">
    <property type="entry name" value="GTP_EFTU"/>
    <property type="match status" value="1"/>
</dbReference>
<dbReference type="Pfam" id="PF11987">
    <property type="entry name" value="IF-2"/>
    <property type="match status" value="1"/>
</dbReference>
<dbReference type="Pfam" id="PF04760">
    <property type="entry name" value="IF2_N"/>
    <property type="match status" value="2"/>
</dbReference>
<dbReference type="SUPFAM" id="SSF52156">
    <property type="entry name" value="Initiation factor IF2/eIF5b, domain 3"/>
    <property type="match status" value="1"/>
</dbReference>
<dbReference type="SUPFAM" id="SSF52540">
    <property type="entry name" value="P-loop containing nucleoside triphosphate hydrolases"/>
    <property type="match status" value="1"/>
</dbReference>
<dbReference type="SUPFAM" id="SSF50447">
    <property type="entry name" value="Translation proteins"/>
    <property type="match status" value="2"/>
</dbReference>
<dbReference type="PROSITE" id="PS51722">
    <property type="entry name" value="G_TR_2"/>
    <property type="match status" value="1"/>
</dbReference>
<dbReference type="PROSITE" id="PS01176">
    <property type="entry name" value="IF2"/>
    <property type="match status" value="1"/>
</dbReference>
<sequence>MSKTRVYQIAEELNISNEELINKLAELDINVTDKDSVLEGEELELALEMLGEDLSQENGNVIEIDGKLTVQVLATKLDKSPSEIIMKLMKMGTMATINQEISFEIAALAAKDYGFELTVAESDDTEALEIEALMEIEEDKEEDLKPRPPVVTVMGHVDHGKTSLLDAIRKTDVISGEAGGITQHIGASEVKINGHKIVFLDTPGHEAFTSMRARGAQVTDIAILVVAADDGIMPQTVEAINHAKAAGVPLIVAINKIDKPGANPDKVKQELADQGLLVEDWGGEVIAVPVSAKKKEGIDTLLEMVLLVAEMEELRANPNKRAVGTVIEAELDKGRGPVATVLVQGGTLTVGDPIVAGVACGKVRAMINAKGKRVKTAGPSTAVEILGLSEVPQGGDQFVEVPTDKIARSVAARRQQIVRDEMLKSTQRLSLDALFSQMSEGSIKDLNIVIKADVQGSVQAVKQSLEKLSNEEVQVKVIHGGVGAVTESDILLAAASNAIIIGFNVRPVPGAESLGEKENVDIRTYTIIYKAIEDIQAAMTGMLDPEYVDEETGKAEIREIYKISGVGTVAGCYVTNGKIFRNCKVRLVRDSIIIHEGELAALKRFKDDVKEVNSGYECGMSFVNYNDIKEGDIVEAYITKEVERKL</sequence>